<gene>
    <name type="primary">mdtF</name>
    <name type="synonym">yhiV</name>
    <name type="ordered locus">b3514</name>
    <name type="ordered locus">JW3482</name>
</gene>
<feature type="chain" id="PRO_0000161841" description="Multidrug resistance protein MdtF">
    <location>
        <begin position="1"/>
        <end position="1037"/>
    </location>
</feature>
<feature type="topological domain" description="Cytoplasmic" evidence="1">
    <location>
        <begin position="1"/>
        <end position="9"/>
    </location>
</feature>
<feature type="transmembrane region" description="Helical; Name=1" evidence="1">
    <location>
        <begin position="10"/>
        <end position="28"/>
    </location>
</feature>
<feature type="topological domain" description="Periplasmic" evidence="1">
    <location>
        <begin position="29"/>
        <end position="339"/>
    </location>
</feature>
<feature type="transmembrane region" description="Helical; Name=2" evidence="1">
    <location>
        <begin position="340"/>
        <end position="359"/>
    </location>
</feature>
<feature type="topological domain" description="Cytoplasmic" evidence="1">
    <location>
        <begin position="360"/>
        <end position="365"/>
    </location>
</feature>
<feature type="transmembrane region" description="Helical; Name=3" evidence="1">
    <location>
        <begin position="366"/>
        <end position="385"/>
    </location>
</feature>
<feature type="topological domain" description="Periplasmic" evidence="1">
    <location>
        <begin position="386"/>
        <end position="391"/>
    </location>
</feature>
<feature type="transmembrane region" description="Helical; Name=4" evidence="1">
    <location>
        <begin position="392"/>
        <end position="413"/>
    </location>
</feature>
<feature type="topological domain" description="Cytoplasmic" evidence="1">
    <location>
        <begin position="414"/>
        <end position="441"/>
    </location>
</feature>
<feature type="transmembrane region" description="Helical; Name=5" evidence="1">
    <location>
        <begin position="442"/>
        <end position="460"/>
    </location>
</feature>
<feature type="topological domain" description="Periplasmic" evidence="1">
    <location>
        <begin position="461"/>
        <end position="473"/>
    </location>
</feature>
<feature type="transmembrane region" description="Helical; Name=6" evidence="1">
    <location>
        <begin position="474"/>
        <end position="496"/>
    </location>
</feature>
<feature type="topological domain" description="Cytoplasmic" evidence="1">
    <location>
        <begin position="497"/>
        <end position="536"/>
    </location>
</feature>
<feature type="transmembrane region" description="Helical; Name=7" evidence="1">
    <location>
        <begin position="537"/>
        <end position="555"/>
    </location>
</feature>
<feature type="topological domain" description="Periplasmic" evidence="1">
    <location>
        <begin position="556"/>
        <end position="870"/>
    </location>
</feature>
<feature type="transmembrane region" description="Helical; Name=8" evidence="1">
    <location>
        <begin position="871"/>
        <end position="890"/>
    </location>
</feature>
<feature type="topological domain" description="Cytoplasmic" evidence="1">
    <location>
        <begin position="891"/>
        <end position="896"/>
    </location>
</feature>
<feature type="transmembrane region" description="Helical; Name=9" evidence="1">
    <location>
        <begin position="897"/>
        <end position="916"/>
    </location>
</feature>
<feature type="topological domain" description="Periplasmic" evidence="1">
    <location>
        <begin position="917"/>
        <end position="922"/>
    </location>
</feature>
<feature type="transmembrane region" description="Helical; Name=10" evidence="1">
    <location>
        <begin position="923"/>
        <end position="944"/>
    </location>
</feature>
<feature type="topological domain" description="Cytoplasmic" evidence="1">
    <location>
        <begin position="945"/>
        <end position="972"/>
    </location>
</feature>
<feature type="transmembrane region" description="Helical; Name=11" evidence="1">
    <location>
        <begin position="973"/>
        <end position="991"/>
    </location>
</feature>
<feature type="topological domain" description="Periplasmic" evidence="1">
    <location>
        <begin position="992"/>
        <end position="1004"/>
    </location>
</feature>
<feature type="transmembrane region" description="Helical; Name=12" evidence="1">
    <location>
        <begin position="1005"/>
        <end position="1027"/>
    </location>
</feature>
<feature type="topological domain" description="Cytoplasmic" evidence="1">
    <location>
        <begin position="1028"/>
        <end position="1037"/>
    </location>
</feature>
<dbReference type="EMBL" id="U00039">
    <property type="protein sequence ID" value="AAB18490.1"/>
    <property type="molecule type" value="Genomic_DNA"/>
</dbReference>
<dbReference type="EMBL" id="U00096">
    <property type="protein sequence ID" value="AAC76539.1"/>
    <property type="molecule type" value="Genomic_DNA"/>
</dbReference>
<dbReference type="EMBL" id="AP009048">
    <property type="protein sequence ID" value="BAE77780.1"/>
    <property type="molecule type" value="Genomic_DNA"/>
</dbReference>
<dbReference type="PIR" id="S47734">
    <property type="entry name" value="S47734"/>
</dbReference>
<dbReference type="RefSeq" id="NP_417971.1">
    <property type="nucleotide sequence ID" value="NC_000913.3"/>
</dbReference>
<dbReference type="RefSeq" id="WP_000024872.1">
    <property type="nucleotide sequence ID" value="NZ_SSZK01000042.1"/>
</dbReference>
<dbReference type="SMR" id="P37637"/>
<dbReference type="BioGRID" id="4262521">
    <property type="interactions" value="292"/>
</dbReference>
<dbReference type="FunCoup" id="P37637">
    <property type="interactions" value="400"/>
</dbReference>
<dbReference type="IntAct" id="P37637">
    <property type="interactions" value="1"/>
</dbReference>
<dbReference type="STRING" id="511145.b3514"/>
<dbReference type="CARD" id="ARO:3000796">
    <property type="molecule name" value="mdtF"/>
    <property type="mechanism identifier" value="ARO:0010000"/>
    <property type="mechanism name" value="antibiotic efflux"/>
</dbReference>
<dbReference type="TCDB" id="2.A.6.2.13">
    <property type="family name" value="the resistance-nodulation-cell division (rnd) superfamily"/>
</dbReference>
<dbReference type="jPOST" id="P37637"/>
<dbReference type="PaxDb" id="511145-b3514"/>
<dbReference type="EnsemblBacteria" id="AAC76539">
    <property type="protein sequence ID" value="AAC76539"/>
    <property type="gene ID" value="b3514"/>
</dbReference>
<dbReference type="GeneID" id="948030"/>
<dbReference type="KEGG" id="ecj:JW3482"/>
<dbReference type="KEGG" id="eco:b3514"/>
<dbReference type="KEGG" id="ecoc:C3026_19040"/>
<dbReference type="PATRIC" id="fig|1411691.4.peg.3204"/>
<dbReference type="EchoBASE" id="EB2152"/>
<dbReference type="eggNOG" id="COG0841">
    <property type="taxonomic scope" value="Bacteria"/>
</dbReference>
<dbReference type="HOGENOM" id="CLU_002755_0_2_6"/>
<dbReference type="InParanoid" id="P37637"/>
<dbReference type="OMA" id="IITTMTV"/>
<dbReference type="OrthoDB" id="9757904at2"/>
<dbReference type="PhylomeDB" id="P37637"/>
<dbReference type="BioCyc" id="EcoCyc:YHIV-MONOMER"/>
<dbReference type="BioCyc" id="MetaCyc:YHIV-MONOMER"/>
<dbReference type="PRO" id="PR:P37637"/>
<dbReference type="Proteomes" id="UP000000625">
    <property type="component" value="Chromosome"/>
</dbReference>
<dbReference type="GO" id="GO:0016020">
    <property type="term" value="C:membrane"/>
    <property type="evidence" value="ECO:0007005"/>
    <property type="project" value="UniProtKB"/>
</dbReference>
<dbReference type="GO" id="GO:0005886">
    <property type="term" value="C:plasma membrane"/>
    <property type="evidence" value="ECO:0000314"/>
    <property type="project" value="EcoCyc"/>
</dbReference>
<dbReference type="GO" id="GO:0015125">
    <property type="term" value="F:bile acid transmembrane transporter activity"/>
    <property type="evidence" value="ECO:0000315"/>
    <property type="project" value="EcoCyc"/>
</dbReference>
<dbReference type="GO" id="GO:0015562">
    <property type="term" value="F:efflux transmembrane transporter activity"/>
    <property type="evidence" value="ECO:0007669"/>
    <property type="project" value="InterPro"/>
</dbReference>
<dbReference type="GO" id="GO:0042802">
    <property type="term" value="F:identical protein binding"/>
    <property type="evidence" value="ECO:0000314"/>
    <property type="project" value="EcoCyc"/>
</dbReference>
<dbReference type="GO" id="GO:0042910">
    <property type="term" value="F:xenobiotic transmembrane transporter activity"/>
    <property type="evidence" value="ECO:0000315"/>
    <property type="project" value="EcoliWiki"/>
</dbReference>
<dbReference type="GO" id="GO:0015721">
    <property type="term" value="P:bile acid and bile salt transport"/>
    <property type="evidence" value="ECO:0000315"/>
    <property type="project" value="EcoCyc"/>
</dbReference>
<dbReference type="GO" id="GO:0046677">
    <property type="term" value="P:response to antibiotic"/>
    <property type="evidence" value="ECO:0000315"/>
    <property type="project" value="EcoCyc"/>
</dbReference>
<dbReference type="GO" id="GO:0009636">
    <property type="term" value="P:response to toxic substance"/>
    <property type="evidence" value="ECO:0000315"/>
    <property type="project" value="EcoCyc"/>
</dbReference>
<dbReference type="GO" id="GO:0006855">
    <property type="term" value="P:xenobiotic transmembrane transport"/>
    <property type="evidence" value="ECO:0000315"/>
    <property type="project" value="EcoliWiki"/>
</dbReference>
<dbReference type="GO" id="GO:0042908">
    <property type="term" value="P:xenobiotic transport"/>
    <property type="evidence" value="ECO:0000315"/>
    <property type="project" value="EcoCyc"/>
</dbReference>
<dbReference type="FunFam" id="1.20.1640.10:FF:000001">
    <property type="entry name" value="Efflux pump membrane transporter"/>
    <property type="match status" value="1"/>
</dbReference>
<dbReference type="FunFam" id="1.20.1640.10:FF:000002">
    <property type="entry name" value="Efflux pump membrane transporter"/>
    <property type="match status" value="1"/>
</dbReference>
<dbReference type="FunFam" id="3.30.2090.10:FF:000001">
    <property type="entry name" value="Efflux pump membrane transporter"/>
    <property type="match status" value="1"/>
</dbReference>
<dbReference type="FunFam" id="3.30.2090.10:FF:000002">
    <property type="entry name" value="Efflux pump membrane transporter"/>
    <property type="match status" value="1"/>
</dbReference>
<dbReference type="FunFam" id="3.30.70.1430:FF:000001">
    <property type="entry name" value="Efflux pump membrane transporter"/>
    <property type="match status" value="1"/>
</dbReference>
<dbReference type="FunFam" id="3.30.70.1430:FF:000002">
    <property type="entry name" value="Efflux pump membrane transporter"/>
    <property type="match status" value="1"/>
</dbReference>
<dbReference type="Gene3D" id="3.30.70.1430">
    <property type="entry name" value="Multidrug efflux transporter AcrB pore domain"/>
    <property type="match status" value="2"/>
</dbReference>
<dbReference type="Gene3D" id="3.30.70.1440">
    <property type="entry name" value="Multidrug efflux transporter AcrB pore domain"/>
    <property type="match status" value="1"/>
</dbReference>
<dbReference type="Gene3D" id="3.30.70.1320">
    <property type="entry name" value="Multidrug efflux transporter AcrB pore domain like"/>
    <property type="match status" value="1"/>
</dbReference>
<dbReference type="Gene3D" id="3.30.2090.10">
    <property type="entry name" value="Multidrug efflux transporter AcrB TolC docking domain, DN and DC subdomains"/>
    <property type="match status" value="2"/>
</dbReference>
<dbReference type="Gene3D" id="1.20.1640.10">
    <property type="entry name" value="Multidrug efflux transporter AcrB transmembrane domain"/>
    <property type="match status" value="2"/>
</dbReference>
<dbReference type="InterPro" id="IPR027463">
    <property type="entry name" value="AcrB_DN_DC_subdom"/>
</dbReference>
<dbReference type="InterPro" id="IPR001036">
    <property type="entry name" value="Acrflvin-R"/>
</dbReference>
<dbReference type="InterPro" id="IPR004764">
    <property type="entry name" value="MdtF-like"/>
</dbReference>
<dbReference type="NCBIfam" id="TIGR00915">
    <property type="entry name" value="2A0602"/>
    <property type="match status" value="1"/>
</dbReference>
<dbReference type="NCBIfam" id="NF000282">
    <property type="entry name" value="RND_permease_1"/>
    <property type="match status" value="1"/>
</dbReference>
<dbReference type="PANTHER" id="PTHR32063">
    <property type="match status" value="1"/>
</dbReference>
<dbReference type="PANTHER" id="PTHR32063:SF13">
    <property type="entry name" value="MULTIDRUG EFFLUX PUMP SUBUNIT ACRB-RELATED"/>
    <property type="match status" value="1"/>
</dbReference>
<dbReference type="Pfam" id="PF00873">
    <property type="entry name" value="ACR_tran"/>
    <property type="match status" value="1"/>
</dbReference>
<dbReference type="PRINTS" id="PR00702">
    <property type="entry name" value="ACRIFLAVINRP"/>
</dbReference>
<dbReference type="SUPFAM" id="SSF82693">
    <property type="entry name" value="Multidrug efflux transporter AcrB pore domain, PN1, PN2, PC1 and PC2 subdomains"/>
    <property type="match status" value="4"/>
</dbReference>
<dbReference type="SUPFAM" id="SSF82714">
    <property type="entry name" value="Multidrug efflux transporter AcrB TolC docking domain, DN and DC subdomains"/>
    <property type="match status" value="2"/>
</dbReference>
<dbReference type="SUPFAM" id="SSF82866">
    <property type="entry name" value="Multidrug efflux transporter AcrB transmembrane domain"/>
    <property type="match status" value="2"/>
</dbReference>
<keyword id="KW-0046">Antibiotic resistance</keyword>
<keyword id="KW-0997">Cell inner membrane</keyword>
<keyword id="KW-1003">Cell membrane</keyword>
<keyword id="KW-0472">Membrane</keyword>
<keyword id="KW-1185">Reference proteome</keyword>
<keyword id="KW-0812">Transmembrane</keyword>
<keyword id="KW-1133">Transmembrane helix</keyword>
<keyword id="KW-0813">Transport</keyword>
<comment type="function">
    <text evidence="2">Part of the tripartite efflux system MdtEF-TolC, which confers resistance to compounds such as rhodamine 6G, erythromycin, doxorubicin, ethidium bromide, TPP, SDS, deoxycholate, crystal violet and benzalkonium.</text>
</comment>
<comment type="subunit">
    <text evidence="3 7">Homotrimer. Part of the tripartite efflux system MdtEF-TolC, which is composed of an inner membrane transporter, MdtF, a membrane fusion protein, MdtE, and an outer membrane component, TolC. The complex forms a large protein conduit and can translocate molecules across both the inner and outer membranes.</text>
</comment>
<comment type="subcellular location">
    <subcellularLocation>
        <location evidence="7">Cell inner membrane</location>
        <topology evidence="7">Multi-pass membrane protein</topology>
    </subcellularLocation>
</comment>
<comment type="induction">
    <text evidence="3 4 5 6">Induced by EvgA, probably via YdeO.</text>
</comment>
<comment type="similarity">
    <text evidence="8">Belongs to the resistance-nodulation-cell division (RND) (TC 2.A.6) family.</text>
</comment>
<sequence>MANYFIDRPVFAWVLAIIMMLAGGLAIMNLPVAQYPQIAPPTITVSATYPGADAQTVEDSVTQVIEQNMNGLDGLMYMSSTSDAAGNASITLTFETGTSPDIAQVQVQNKLQLAMPSLPEAVQQQGISVDKSSSNILMVAAFISDNGSLNQYDIADYVASNIKDPLSRTAGVGSVQLFGSEYAMRIWLDPQKLNKYNLVPSDVISQIKVQNNQISGGQLGGMPQAADQQLNASIIVQTRLQTPEEFGKILLKVQQDGSQVLLRDVARVELGAEDYSTVARYNGKPAAGIAIKLAAGANALDTSRAVKEELNRLSAYFPASLKTVYPYDTTPFIEISIQEVFKTLVEAIILVFLVMYLFLQNFRATIIPTIAVPVVILGTFAILSAVGFTINTLTMFGMVLAIGLLVDDAIVVVENVERVIAEDKLPPKEATHKSMGQIQRALVGIAVVLSAVFMPMAFMSGATGEIYRQFSITLISSMLLSVFVAMSLTPALCATILKAAPEGGHKPNALFARFNTLFEKSTQHYTDSTRSLLRCTGRYMVVYLLICAGMAVLFLRTPTSFLPEEDQGVFMTTAQLPSGATMVNTTKVLQQVTDYYLTKEKDNVQSVFTVGGFGFSGQGQNNGLAFISLKPWSERVGEENSVTAIIQRAMIALSSINKAVVFPFNLPAVAELGTASGFDMELLDNGNLGHEKLTQARNELLSLAAQSPNQVTGVRPNGLEDTPMFKVNVNAAKAEAMGVALSDINQTISTAFGSSYVNDFLNQGRVKKVYVQAGTPFRMLPDNINQWYVRNASGTMAPLSAYSSTEWTYGSPRLERYNGIPSMEILGEAAAGKSTGDAMKFMADLVAKLPAGVGYSWTGLSYQEALSSNQAPALYAISLVVVFLALAALYESWSIPFSVMLVVPLGVVGALLATDLRGLSNDVYFQVGLLTTIGLSAKNAILIVEFAVEMMQKEGKTPIEAIIEAARMRLRPILMTSLAFILGVLPLVISHGAGSGAQNAVGTGVMGGMFAATVLAIYFVPVFFVVVEHLFARFKKA</sequence>
<reference key="1">
    <citation type="journal article" date="1994" name="Nucleic Acids Res.">
        <title>Analysis of the Escherichia coli genome. V. DNA sequence of the region from 76.0 to 81.5 minutes.</title>
        <authorList>
            <person name="Sofia H.J."/>
            <person name="Burland V."/>
            <person name="Daniels D.L."/>
            <person name="Plunkett G. III"/>
            <person name="Blattner F.R."/>
        </authorList>
    </citation>
    <scope>NUCLEOTIDE SEQUENCE [LARGE SCALE GENOMIC DNA]</scope>
    <source>
        <strain>K12 / MG1655 / ATCC 47076</strain>
    </source>
</reference>
<reference key="2">
    <citation type="journal article" date="1997" name="Science">
        <title>The complete genome sequence of Escherichia coli K-12.</title>
        <authorList>
            <person name="Blattner F.R."/>
            <person name="Plunkett G. III"/>
            <person name="Bloch C.A."/>
            <person name="Perna N.T."/>
            <person name="Burland V."/>
            <person name="Riley M."/>
            <person name="Collado-Vides J."/>
            <person name="Glasner J.D."/>
            <person name="Rode C.K."/>
            <person name="Mayhew G.F."/>
            <person name="Gregor J."/>
            <person name="Davis N.W."/>
            <person name="Kirkpatrick H.A."/>
            <person name="Goeden M.A."/>
            <person name="Rose D.J."/>
            <person name="Mau B."/>
            <person name="Shao Y."/>
        </authorList>
    </citation>
    <scope>NUCLEOTIDE SEQUENCE [LARGE SCALE GENOMIC DNA]</scope>
    <source>
        <strain>K12 / MG1655 / ATCC 47076</strain>
    </source>
</reference>
<reference key="3">
    <citation type="journal article" date="2006" name="Mol. Syst. Biol.">
        <title>Highly accurate genome sequences of Escherichia coli K-12 strains MG1655 and W3110.</title>
        <authorList>
            <person name="Hayashi K."/>
            <person name="Morooka N."/>
            <person name="Yamamoto Y."/>
            <person name="Fujita K."/>
            <person name="Isono K."/>
            <person name="Choi S."/>
            <person name="Ohtsubo E."/>
            <person name="Baba T."/>
            <person name="Wanner B.L."/>
            <person name="Mori H."/>
            <person name="Horiuchi T."/>
        </authorList>
    </citation>
    <scope>NUCLEOTIDE SEQUENCE [LARGE SCALE GENOMIC DNA]</scope>
    <source>
        <strain>K12 / W3110 / ATCC 27325 / DSM 5911</strain>
    </source>
</reference>
<reference key="4">
    <citation type="journal article" date="2001" name="J. Bacteriol.">
        <title>Analysis of a complete library of putative drug transporter genes in Escherichia coli.</title>
        <authorList>
            <person name="Nishino K."/>
            <person name="Yamaguchi A."/>
        </authorList>
    </citation>
    <scope>FUNCTION IN MULTIDRUG RESISTANCE</scope>
</reference>
<reference key="5">
    <citation type="journal article" date="2002" name="J. Bacteriol.">
        <title>EvgA of the two-component signal transduction system modulates production of the yhiUV multidrug transporter in Escherichia coli.</title>
        <authorList>
            <person name="Nishino K."/>
            <person name="Yamaguchi A."/>
        </authorList>
    </citation>
    <scope>INDUCTION</scope>
    <scope>SUBUNIT</scope>
</reference>
<reference key="6">
    <citation type="journal article" date="2002" name="J. Bacteriol.">
        <title>Escherichia coli gene expression responsive to levels of the response regulator EvgA.</title>
        <authorList>
            <person name="Masuda N."/>
            <person name="Church G.M."/>
        </authorList>
    </citation>
    <scope>INDUCTION</scope>
    <source>
        <strain>K12 / MG1655 / ATCC 47076</strain>
    </source>
</reference>
<reference key="7">
    <citation type="journal article" date="2003" name="Microbiology">
        <title>Transcriptional regulation of drug efflux genes by EvgAS, a two-component system in Escherichia coli.</title>
        <authorList>
            <person name="Eguchi Y."/>
            <person name="Oshima T."/>
            <person name="Mori H."/>
            <person name="Aono R."/>
            <person name="Yamamoto K."/>
            <person name="Ishihama A."/>
            <person name="Utsumi R."/>
        </authorList>
    </citation>
    <scope>INDUCTION</scope>
</reference>
<reference key="8">
    <citation type="journal article" date="2003" name="Mol. Microbiol.">
        <title>Regulatory network of acid resistance genes in Escherichia coli.</title>
        <authorList>
            <person name="Masuda N."/>
            <person name="Church G.M."/>
        </authorList>
    </citation>
    <scope>INDUCTION</scope>
    <source>
        <strain>K12 / MG1655 / ATCC 47076</strain>
    </source>
</reference>
<reference key="9">
    <citation type="journal article" date="2005" name="J. Biol. Chem.">
        <title>Protein complexes of the Escherichia coli cell envelope.</title>
        <authorList>
            <person name="Stenberg F."/>
            <person name="Chovanec P."/>
            <person name="Maslen S.L."/>
            <person name="Robinson C.V."/>
            <person name="Ilag L."/>
            <person name="von Heijne G."/>
            <person name="Daley D.O."/>
        </authorList>
    </citation>
    <scope>SUBUNIT</scope>
    <scope>SUBCELLULAR LOCATION</scope>
    <source>
        <strain>BL21-DE3</strain>
    </source>
</reference>
<reference key="10">
    <citation type="journal article" date="2005" name="Science">
        <title>Global topology analysis of the Escherichia coli inner membrane proteome.</title>
        <authorList>
            <person name="Daley D.O."/>
            <person name="Rapp M."/>
            <person name="Granseth E."/>
            <person name="Melen K."/>
            <person name="Drew D."/>
            <person name="von Heijne G."/>
        </authorList>
    </citation>
    <scope>TOPOLOGY [LARGE SCALE ANALYSIS]</scope>
    <source>
        <strain>K12 / MG1655 / ATCC 47076</strain>
    </source>
</reference>
<proteinExistence type="evidence at protein level"/>
<organism>
    <name type="scientific">Escherichia coli (strain K12)</name>
    <dbReference type="NCBI Taxonomy" id="83333"/>
    <lineage>
        <taxon>Bacteria</taxon>
        <taxon>Pseudomonadati</taxon>
        <taxon>Pseudomonadota</taxon>
        <taxon>Gammaproteobacteria</taxon>
        <taxon>Enterobacterales</taxon>
        <taxon>Enterobacteriaceae</taxon>
        <taxon>Escherichia</taxon>
    </lineage>
</organism>
<name>MDTF_ECOLI</name>
<accession>P37637</accession>
<accession>Q2M7H6</accession>
<evidence type="ECO:0000250" key="1"/>
<evidence type="ECO:0000269" key="2">
    <source>
    </source>
</evidence>
<evidence type="ECO:0000269" key="3">
    <source>
    </source>
</evidence>
<evidence type="ECO:0000269" key="4">
    <source>
    </source>
</evidence>
<evidence type="ECO:0000269" key="5">
    <source>
    </source>
</evidence>
<evidence type="ECO:0000269" key="6">
    <source>
    </source>
</evidence>
<evidence type="ECO:0000269" key="7">
    <source>
    </source>
</evidence>
<evidence type="ECO:0000305" key="8"/>
<protein>
    <recommendedName>
        <fullName>Multidrug resistance protein MdtF</fullName>
    </recommendedName>
</protein>